<protein>
    <recommendedName>
        <fullName>Cystatin WCPI-3</fullName>
    </recommendedName>
</protein>
<accession>P19864</accession>
<sequence length="46" mass="5048">YGNTGGYTPVPDIDDIHVVEIANYAVTEYNKKSGVVAGVNYRFVLK</sequence>
<name>CYT3_WISFL</name>
<organism>
    <name type="scientific">Wisteria floribunda</name>
    <name type="common">Japanese wisteria</name>
    <name type="synonym">Glycine floribunda</name>
    <dbReference type="NCBI Taxonomy" id="3922"/>
    <lineage>
        <taxon>Eukaryota</taxon>
        <taxon>Viridiplantae</taxon>
        <taxon>Streptophyta</taxon>
        <taxon>Embryophyta</taxon>
        <taxon>Tracheophyta</taxon>
        <taxon>Spermatophyta</taxon>
        <taxon>Magnoliopsida</taxon>
        <taxon>eudicotyledons</taxon>
        <taxon>Gunneridae</taxon>
        <taxon>Pentapetalae</taxon>
        <taxon>rosids</taxon>
        <taxon>fabids</taxon>
        <taxon>Fabales</taxon>
        <taxon>Fabaceae</taxon>
        <taxon>Papilionoideae</taxon>
        <taxon>50 kb inversion clade</taxon>
        <taxon>NPAAA clade</taxon>
        <taxon>indigoferoid/millettioid clade</taxon>
        <taxon>Wisterieae</taxon>
        <taxon>Wisteria</taxon>
    </lineage>
</organism>
<reference key="1">
    <citation type="journal article" date="1990" name="J. Biochem.">
        <title>Purification and complex formation analysis of a cysteine proteinase inhibitor (cystatin) from seeds of Wisteria floribunda.</title>
        <authorList>
            <person name="Hirashiki I."/>
            <person name="Ogata F."/>
            <person name="Yoshida N."/>
            <person name="Makisumi S."/>
            <person name="Ito A."/>
        </authorList>
    </citation>
    <scope>PROTEIN SEQUENCE</scope>
    <source>
        <tissue>Seed</tissue>
    </source>
</reference>
<keyword id="KW-0903">Direct protein sequencing</keyword>
<keyword id="KW-0646">Protease inhibitor</keyword>
<keyword id="KW-0789">Thiol protease inhibitor</keyword>
<proteinExistence type="evidence at protein level"/>
<dbReference type="PIR" id="PX0039">
    <property type="entry name" value="PX0039"/>
</dbReference>
<dbReference type="SMR" id="P19864"/>
<dbReference type="MEROPS" id="I25.950"/>
<dbReference type="GO" id="GO:0004869">
    <property type="term" value="F:cysteine-type endopeptidase inhibitor activity"/>
    <property type="evidence" value="ECO:0007669"/>
    <property type="project" value="UniProtKB-KW"/>
</dbReference>
<dbReference type="CDD" id="cd00042">
    <property type="entry name" value="CY"/>
    <property type="match status" value="1"/>
</dbReference>
<dbReference type="Gene3D" id="3.10.450.10">
    <property type="match status" value="1"/>
</dbReference>
<dbReference type="InterPro" id="IPR000010">
    <property type="entry name" value="Cystatin_dom"/>
</dbReference>
<dbReference type="InterPro" id="IPR046350">
    <property type="entry name" value="Cystatin_sf"/>
</dbReference>
<dbReference type="SUPFAM" id="SSF54403">
    <property type="entry name" value="Cystatin/monellin"/>
    <property type="match status" value="1"/>
</dbReference>
<feature type="chain" id="PRO_0000207162" description="Cystatin WCPI-3">
    <location>
        <begin position="1"/>
        <end position="46" status="greater than"/>
    </location>
</feature>
<feature type="short sequence motif" description="Secondary area of contact">
    <location>
        <begin position="35"/>
        <end position="38"/>
    </location>
</feature>
<feature type="non-consecutive residues" evidence="1">
    <location>
        <begin position="34"/>
        <end position="35"/>
    </location>
</feature>
<feature type="non-terminal residue">
    <location>
        <position position="46"/>
    </location>
</feature>
<evidence type="ECO:0000305" key="1"/>
<comment type="function">
    <text>Inhibitor of papain.</text>
</comment>
<comment type="similarity">
    <text evidence="1">Belongs to the cystatin family. Phytocystatin subfamily.</text>
</comment>